<dbReference type="EMBL" id="AY144969">
    <property type="protein sequence ID" value="AAO32532.1"/>
    <property type="molecule type" value="Genomic_DNA"/>
</dbReference>
<dbReference type="EMBL" id="HE576754">
    <property type="protein sequence ID" value="CCC69177.1"/>
    <property type="status" value="ALT_FRAME"/>
    <property type="molecule type" value="Genomic_DNA"/>
</dbReference>
<dbReference type="SMR" id="Q875V0"/>
<dbReference type="FunCoup" id="Q875V0">
    <property type="interactions" value="1381"/>
</dbReference>
<dbReference type="STRING" id="1064592.Q875V0"/>
<dbReference type="KEGG" id="ncs:NCAS_0C01870"/>
<dbReference type="eggNOG" id="KOG0103">
    <property type="taxonomic scope" value="Eukaryota"/>
</dbReference>
<dbReference type="HOGENOM" id="CLU_005965_0_1_1"/>
<dbReference type="InParanoid" id="Q875V0"/>
<dbReference type="OrthoDB" id="434160at2759"/>
<dbReference type="Proteomes" id="UP000001640">
    <property type="component" value="Chromosome 3"/>
</dbReference>
<dbReference type="GO" id="GO:0005829">
    <property type="term" value="C:cytosol"/>
    <property type="evidence" value="ECO:0007669"/>
    <property type="project" value="TreeGrafter"/>
</dbReference>
<dbReference type="GO" id="GO:0005634">
    <property type="term" value="C:nucleus"/>
    <property type="evidence" value="ECO:0007669"/>
    <property type="project" value="TreeGrafter"/>
</dbReference>
<dbReference type="GO" id="GO:0005524">
    <property type="term" value="F:ATP binding"/>
    <property type="evidence" value="ECO:0007669"/>
    <property type="project" value="UniProtKB-KW"/>
</dbReference>
<dbReference type="GO" id="GO:0140662">
    <property type="term" value="F:ATP-dependent protein folding chaperone"/>
    <property type="evidence" value="ECO:0007669"/>
    <property type="project" value="InterPro"/>
</dbReference>
<dbReference type="CDD" id="cd24094">
    <property type="entry name" value="ASKHA_NBD_HSP70_ScSse"/>
    <property type="match status" value="1"/>
</dbReference>
<dbReference type="FunFam" id="1.20.1270.10:FF:000002">
    <property type="entry name" value="Heat shock 70 kDa protein 4"/>
    <property type="match status" value="1"/>
</dbReference>
<dbReference type="FunFam" id="3.30.30.30:FF:000002">
    <property type="entry name" value="Heat shock 70 kDa protein 4"/>
    <property type="match status" value="1"/>
</dbReference>
<dbReference type="FunFam" id="3.30.420.40:FF:000171">
    <property type="entry name" value="Heat shock 70 kDa protein 4"/>
    <property type="match status" value="2"/>
</dbReference>
<dbReference type="FunFam" id="3.90.640.10:FF:000004">
    <property type="entry name" value="Heat shock 70 kDa protein 4"/>
    <property type="match status" value="1"/>
</dbReference>
<dbReference type="FunFam" id="2.60.34.10:FF:000020">
    <property type="entry name" value="Heat shock SSE1"/>
    <property type="match status" value="1"/>
</dbReference>
<dbReference type="Gene3D" id="1.20.1270.10">
    <property type="match status" value="1"/>
</dbReference>
<dbReference type="Gene3D" id="3.30.30.30">
    <property type="match status" value="1"/>
</dbReference>
<dbReference type="Gene3D" id="3.30.420.40">
    <property type="match status" value="2"/>
</dbReference>
<dbReference type="Gene3D" id="3.90.640.10">
    <property type="entry name" value="Actin, Chain A, domain 4"/>
    <property type="match status" value="1"/>
</dbReference>
<dbReference type="Gene3D" id="2.60.34.10">
    <property type="entry name" value="Substrate Binding Domain Of DNAk, Chain A, domain 1"/>
    <property type="match status" value="1"/>
</dbReference>
<dbReference type="InterPro" id="IPR043129">
    <property type="entry name" value="ATPase_NBD"/>
</dbReference>
<dbReference type="InterPro" id="IPR018181">
    <property type="entry name" value="Heat_shock_70_CS"/>
</dbReference>
<dbReference type="InterPro" id="IPR029048">
    <property type="entry name" value="HSP70_C_sf"/>
</dbReference>
<dbReference type="InterPro" id="IPR029047">
    <property type="entry name" value="HSP70_peptide-bd_sf"/>
</dbReference>
<dbReference type="InterPro" id="IPR013126">
    <property type="entry name" value="Hsp_70_fam"/>
</dbReference>
<dbReference type="PANTHER" id="PTHR45639:SF4">
    <property type="entry name" value="HSC70CB, ISOFORM G"/>
    <property type="match status" value="1"/>
</dbReference>
<dbReference type="PANTHER" id="PTHR45639">
    <property type="entry name" value="HSC70CB, ISOFORM G-RELATED"/>
    <property type="match status" value="1"/>
</dbReference>
<dbReference type="Pfam" id="PF00012">
    <property type="entry name" value="HSP70"/>
    <property type="match status" value="1"/>
</dbReference>
<dbReference type="PRINTS" id="PR00301">
    <property type="entry name" value="HEATSHOCK70"/>
</dbReference>
<dbReference type="SUPFAM" id="SSF53067">
    <property type="entry name" value="Actin-like ATPase domain"/>
    <property type="match status" value="2"/>
</dbReference>
<dbReference type="SUPFAM" id="SSF100934">
    <property type="entry name" value="Heat shock protein 70kD (HSP70), C-terminal subdomain"/>
    <property type="match status" value="1"/>
</dbReference>
<dbReference type="SUPFAM" id="SSF100920">
    <property type="entry name" value="Heat shock protein 70kD (HSP70), peptide-binding domain"/>
    <property type="match status" value="1"/>
</dbReference>
<dbReference type="PROSITE" id="PS00329">
    <property type="entry name" value="HSP70_2"/>
    <property type="match status" value="1"/>
</dbReference>
<accession>Q875V0</accession>
<accession>G0VCG7</accession>
<comment type="subcellular location">
    <subcellularLocation>
        <location evidence="1">Cytoplasm</location>
    </subcellularLocation>
</comment>
<comment type="similarity">
    <text evidence="3">Belongs to the heat shock protein 70 family.</text>
</comment>
<comment type="sequence caution" evidence="3">
    <conflict type="frameshift">
        <sequence resource="EMBL-CDS" id="CCC69177"/>
    </conflict>
</comment>
<gene>
    <name type="primary">SSE1</name>
    <name type="ordered locus">NCAS_0C01870</name>
</gene>
<name>HSP7F_NAUCA</name>
<sequence>MSTPFGLDLGNNNSVLAVARNRGIDIVVNEVSNRSTPSLVGFGQKNRFLGEAGKTKETSNIKNTVGNLKRIVGLDYTHPDFSTESQFFSSKLVELDDKKVGTQVRLAGESKTFSATQLAAMFIGKVKNTVQQETKSNINDICIAVPAWYSEEQRYSIADAAKVAGLNPVRIVNDVTAAAVSYGVFKTDLPEGDAKPRIVAFVDIGHSSYTCSIMAFKKGELKVLGTAYDKHFGGRDFDRAITEHFADEFKSKYKIDIRTNAKAYNRILTAAEKLKKVLSANTQAPFSAESVMDDVDVSSSMTREELEELVKPLLTRVTEPVTKALAQANLTVEDIDFVEIIGGTTRIPTLKNSISEAFNKPLSTTLNQDEAIAKGAAFICAIHSPTLRVRPFKFEDIHPYSVSYSWDKQVEEEESMEVFPAGSTFPSTKLITLQRTGDFQMSAYYTTPEQLPKGTKADIAKWEITGLQVPEGAESVPVKVVLRCDPSGLHTIEEAYTVEDIKVQEVVPLPEDAPEDAEPEFREVTKTVKKDALTIVAHTFALEGKPLNDLIEKENAMFAQDKLVAETEDRKNALEEYIYTLRGKLEEEYAPFASEAEKTKLTGMLAKAEEWLYDEGYDSIKAKYIAKYEELASLGNMIRGRYLAKEEEKRQALRSNQEASKMADLSAKLAAQRKAEAEAKENAKE</sequence>
<reference key="1">
    <citation type="journal article" date="2003" name="Nature">
        <title>Yeast genome duplication was followed by asynchronous differentiation of duplicated genes.</title>
        <authorList>
            <person name="Langkjaer R.B."/>
            <person name="Cliften P.F."/>
            <person name="Johnston M."/>
            <person name="Piskur J."/>
        </authorList>
    </citation>
    <scope>NUCLEOTIDE SEQUENCE [GENOMIC DNA]</scope>
    <source>
        <strain>ATCC 76901 / BCRC 22586 / CBS 4309 / NBRC 1992 / NRRL Y-12630</strain>
    </source>
</reference>
<reference key="2">
    <citation type="submission" date="2011-07" db="EMBL/GenBank/DDBJ databases">
        <title>Genome sequence of Naumovozyma castellii.</title>
        <authorList>
            <person name="Gordon J.L."/>
            <person name="Armisen D."/>
            <person name="Proux-Wera E."/>
            <person name="OhEigeartaigh S.S."/>
            <person name="Byrne K.P."/>
            <person name="Wolfe K.H."/>
        </authorList>
    </citation>
    <scope>NUCLEOTIDE SEQUENCE [LARGE SCALE GENOMIC DNA]</scope>
    <source>
        <strain>ATCC 76901 / BCRC 22586 / CBS 4309 / NBRC 1992 / NRRL Y-12630</strain>
    </source>
</reference>
<evidence type="ECO:0000250" key="1"/>
<evidence type="ECO:0000256" key="2">
    <source>
        <dbReference type="SAM" id="MobiDB-lite"/>
    </source>
</evidence>
<evidence type="ECO:0000305" key="3"/>
<protein>
    <recommendedName>
        <fullName>Heat shock protein homolog SSE1</fullName>
    </recommendedName>
</protein>
<organism>
    <name type="scientific">Naumovozyma castellii</name>
    <name type="common">Yeast</name>
    <name type="synonym">Saccharomyces castellii</name>
    <dbReference type="NCBI Taxonomy" id="27288"/>
    <lineage>
        <taxon>Eukaryota</taxon>
        <taxon>Fungi</taxon>
        <taxon>Dikarya</taxon>
        <taxon>Ascomycota</taxon>
        <taxon>Saccharomycotina</taxon>
        <taxon>Saccharomycetes</taxon>
        <taxon>Saccharomycetales</taxon>
        <taxon>Saccharomycetaceae</taxon>
        <taxon>Naumovozyma</taxon>
    </lineage>
</organism>
<proteinExistence type="inferred from homology"/>
<feature type="chain" id="PRO_0000078394" description="Heat shock protein homolog SSE1">
    <location>
        <begin position="1"/>
        <end position="685"/>
    </location>
</feature>
<feature type="region of interest" description="Disordered" evidence="2">
    <location>
        <begin position="651"/>
        <end position="685"/>
    </location>
</feature>
<feature type="compositionally biased region" description="Basic and acidic residues" evidence="2">
    <location>
        <begin position="673"/>
        <end position="685"/>
    </location>
</feature>
<keyword id="KW-0067">ATP-binding</keyword>
<keyword id="KW-0143">Chaperone</keyword>
<keyword id="KW-0963">Cytoplasm</keyword>
<keyword id="KW-0547">Nucleotide-binding</keyword>
<keyword id="KW-1185">Reference proteome</keyword>
<keyword id="KW-0346">Stress response</keyword>